<comment type="function">
    <text evidence="1">Catalyzes the reversible interconversion of serine and glycine with tetrahydrofolate (THF) serving as the one-carbon carrier. This reaction serves as the major source of one-carbon groups required for the biosynthesis of purines, thymidylate, methionine, and other important biomolecules. Also exhibits THF-independent aldolase activity toward beta-hydroxyamino acids, producing glycine and aldehydes, via a retro-aldol mechanism.</text>
</comment>
<comment type="catalytic activity">
    <reaction evidence="1">
        <text>(6R)-5,10-methylene-5,6,7,8-tetrahydrofolate + glycine + H2O = (6S)-5,6,7,8-tetrahydrofolate + L-serine</text>
        <dbReference type="Rhea" id="RHEA:15481"/>
        <dbReference type="ChEBI" id="CHEBI:15377"/>
        <dbReference type="ChEBI" id="CHEBI:15636"/>
        <dbReference type="ChEBI" id="CHEBI:33384"/>
        <dbReference type="ChEBI" id="CHEBI:57305"/>
        <dbReference type="ChEBI" id="CHEBI:57453"/>
        <dbReference type="EC" id="2.1.2.1"/>
    </reaction>
</comment>
<comment type="cofactor">
    <cofactor evidence="1">
        <name>pyridoxal 5'-phosphate</name>
        <dbReference type="ChEBI" id="CHEBI:597326"/>
    </cofactor>
</comment>
<comment type="pathway">
    <text evidence="1">One-carbon metabolism; tetrahydrofolate interconversion.</text>
</comment>
<comment type="pathway">
    <text evidence="1">Amino-acid biosynthesis; glycine biosynthesis; glycine from L-serine: step 1/1.</text>
</comment>
<comment type="subunit">
    <text evidence="1">Homodimer.</text>
</comment>
<comment type="subcellular location">
    <subcellularLocation>
        <location evidence="1">Cytoplasm</location>
    </subcellularLocation>
</comment>
<comment type="similarity">
    <text evidence="1">Belongs to the SHMT family.</text>
</comment>
<evidence type="ECO:0000255" key="1">
    <source>
        <dbReference type="HAMAP-Rule" id="MF_00051"/>
    </source>
</evidence>
<organism>
    <name type="scientific">Lawsonia intracellularis (strain PHE/MN1-00)</name>
    <dbReference type="NCBI Taxonomy" id="363253"/>
    <lineage>
        <taxon>Bacteria</taxon>
        <taxon>Pseudomonadati</taxon>
        <taxon>Thermodesulfobacteriota</taxon>
        <taxon>Desulfovibrionia</taxon>
        <taxon>Desulfovibrionales</taxon>
        <taxon>Desulfovibrionaceae</taxon>
        <taxon>Lawsonia</taxon>
    </lineage>
</organism>
<feature type="chain" id="PRO_1000006274" description="Serine hydroxymethyltransferase">
    <location>
        <begin position="1"/>
        <end position="412"/>
    </location>
</feature>
<feature type="binding site" evidence="1">
    <location>
        <position position="117"/>
    </location>
    <ligand>
        <name>(6S)-5,6,7,8-tetrahydrofolate</name>
        <dbReference type="ChEBI" id="CHEBI:57453"/>
    </ligand>
</feature>
<feature type="binding site" evidence="1">
    <location>
        <begin position="121"/>
        <end position="123"/>
    </location>
    <ligand>
        <name>(6S)-5,6,7,8-tetrahydrofolate</name>
        <dbReference type="ChEBI" id="CHEBI:57453"/>
    </ligand>
</feature>
<feature type="binding site" evidence="1">
    <location>
        <begin position="349"/>
        <end position="351"/>
    </location>
    <ligand>
        <name>(6S)-5,6,7,8-tetrahydrofolate</name>
        <dbReference type="ChEBI" id="CHEBI:57453"/>
    </ligand>
</feature>
<feature type="site" description="Plays an important role in substrate specificity" evidence="1">
    <location>
        <position position="225"/>
    </location>
</feature>
<feature type="modified residue" description="N6-(pyridoxal phosphate)lysine" evidence="1">
    <location>
        <position position="226"/>
    </location>
</feature>
<sequence>MDQIILQDPELAQAIILESGRQIDKLELIASENIASTAVREAQSTILTNKYAEGYPGKRYYGGCEYVDIAENLAIERAKALFHSEYANVQPHSGSQANMGAYFALIKPRDTILGMNLSHGGHLTHGSPVNFSGRLFNIVSYGVNKETGLIDYEEVAKLAEKHKPQLIVAGASAYPRIIDFSKFRSIADTIGAKLLVDMAHIAGLVATNLHPSPIPYAHITTTTTHKTLRGPRGGMILSTEDMGKVINSQIFPGIQGGPLMHVIAAKAVALGEASKASFVTYQKQVILNAKTLAKQLLDAGFNLVSGGTDNHLLLIDLTNKKITGKDAEKALDQAGITVNKNTVPFETLSPFVTSGIRIGTPALTTRGLCEQDMIKVANWIVTALNNINNETQLKEINKEVTYFARQFPLFSW</sequence>
<accession>Q1MS11</accession>
<gene>
    <name evidence="1" type="primary">glyA</name>
    <name type="ordered locus">LI0159</name>
</gene>
<name>GLYA_LAWIP</name>
<proteinExistence type="inferred from homology"/>
<reference key="1">
    <citation type="submission" date="2005-11" db="EMBL/GenBank/DDBJ databases">
        <title>The complete genome sequence of Lawsonia intracellularis: the causative agent of proliferative enteropathy.</title>
        <authorList>
            <person name="Kaur K."/>
            <person name="Zhang Q."/>
            <person name="Beckler D."/>
            <person name="Munir S."/>
            <person name="Li L."/>
            <person name="Kinsley K."/>
            <person name="Herron L."/>
            <person name="Peterson A."/>
            <person name="May B."/>
            <person name="Singh S."/>
            <person name="Gebhart C."/>
            <person name="Kapur V."/>
        </authorList>
    </citation>
    <scope>NUCLEOTIDE SEQUENCE [LARGE SCALE GENOMIC DNA]</scope>
    <source>
        <strain>PHE/MN1-00</strain>
    </source>
</reference>
<dbReference type="EC" id="2.1.2.1" evidence="1"/>
<dbReference type="EMBL" id="AM180252">
    <property type="protein sequence ID" value="CAJ54215.1"/>
    <property type="molecule type" value="Genomic_DNA"/>
</dbReference>
<dbReference type="RefSeq" id="WP_011526241.1">
    <property type="nucleotide sequence ID" value="NC_008011.1"/>
</dbReference>
<dbReference type="SMR" id="Q1MS11"/>
<dbReference type="STRING" id="363253.LI0159"/>
<dbReference type="KEGG" id="lip:LI0159"/>
<dbReference type="eggNOG" id="COG0112">
    <property type="taxonomic scope" value="Bacteria"/>
</dbReference>
<dbReference type="HOGENOM" id="CLU_022477_2_1_7"/>
<dbReference type="OrthoDB" id="9803846at2"/>
<dbReference type="UniPathway" id="UPA00193"/>
<dbReference type="UniPathway" id="UPA00288">
    <property type="reaction ID" value="UER01023"/>
</dbReference>
<dbReference type="Proteomes" id="UP000002430">
    <property type="component" value="Chromosome"/>
</dbReference>
<dbReference type="GO" id="GO:0005829">
    <property type="term" value="C:cytosol"/>
    <property type="evidence" value="ECO:0007669"/>
    <property type="project" value="TreeGrafter"/>
</dbReference>
<dbReference type="GO" id="GO:0004372">
    <property type="term" value="F:glycine hydroxymethyltransferase activity"/>
    <property type="evidence" value="ECO:0007669"/>
    <property type="project" value="UniProtKB-UniRule"/>
</dbReference>
<dbReference type="GO" id="GO:0030170">
    <property type="term" value="F:pyridoxal phosphate binding"/>
    <property type="evidence" value="ECO:0007669"/>
    <property type="project" value="UniProtKB-UniRule"/>
</dbReference>
<dbReference type="GO" id="GO:0019264">
    <property type="term" value="P:glycine biosynthetic process from serine"/>
    <property type="evidence" value="ECO:0007669"/>
    <property type="project" value="UniProtKB-UniRule"/>
</dbReference>
<dbReference type="GO" id="GO:0035999">
    <property type="term" value="P:tetrahydrofolate interconversion"/>
    <property type="evidence" value="ECO:0007669"/>
    <property type="project" value="UniProtKB-UniRule"/>
</dbReference>
<dbReference type="CDD" id="cd00378">
    <property type="entry name" value="SHMT"/>
    <property type="match status" value="1"/>
</dbReference>
<dbReference type="FunFam" id="3.40.640.10:FF:000001">
    <property type="entry name" value="Serine hydroxymethyltransferase"/>
    <property type="match status" value="1"/>
</dbReference>
<dbReference type="FunFam" id="3.90.1150.10:FF:000003">
    <property type="entry name" value="Serine hydroxymethyltransferase"/>
    <property type="match status" value="1"/>
</dbReference>
<dbReference type="Gene3D" id="3.90.1150.10">
    <property type="entry name" value="Aspartate Aminotransferase, domain 1"/>
    <property type="match status" value="1"/>
</dbReference>
<dbReference type="Gene3D" id="3.40.640.10">
    <property type="entry name" value="Type I PLP-dependent aspartate aminotransferase-like (Major domain)"/>
    <property type="match status" value="1"/>
</dbReference>
<dbReference type="HAMAP" id="MF_00051">
    <property type="entry name" value="SHMT"/>
    <property type="match status" value="1"/>
</dbReference>
<dbReference type="InterPro" id="IPR015424">
    <property type="entry name" value="PyrdxlP-dep_Trfase"/>
</dbReference>
<dbReference type="InterPro" id="IPR015421">
    <property type="entry name" value="PyrdxlP-dep_Trfase_major"/>
</dbReference>
<dbReference type="InterPro" id="IPR015422">
    <property type="entry name" value="PyrdxlP-dep_Trfase_small"/>
</dbReference>
<dbReference type="InterPro" id="IPR001085">
    <property type="entry name" value="Ser_HO-MeTrfase"/>
</dbReference>
<dbReference type="InterPro" id="IPR049943">
    <property type="entry name" value="Ser_HO-MeTrfase-like"/>
</dbReference>
<dbReference type="InterPro" id="IPR019798">
    <property type="entry name" value="Ser_HO-MeTrfase_PLP_BS"/>
</dbReference>
<dbReference type="InterPro" id="IPR039429">
    <property type="entry name" value="SHMT-like_dom"/>
</dbReference>
<dbReference type="NCBIfam" id="NF000586">
    <property type="entry name" value="PRK00011.1"/>
    <property type="match status" value="1"/>
</dbReference>
<dbReference type="PANTHER" id="PTHR11680">
    <property type="entry name" value="SERINE HYDROXYMETHYLTRANSFERASE"/>
    <property type="match status" value="1"/>
</dbReference>
<dbReference type="PANTHER" id="PTHR11680:SF35">
    <property type="entry name" value="SERINE HYDROXYMETHYLTRANSFERASE 1"/>
    <property type="match status" value="1"/>
</dbReference>
<dbReference type="Pfam" id="PF00464">
    <property type="entry name" value="SHMT"/>
    <property type="match status" value="1"/>
</dbReference>
<dbReference type="PIRSF" id="PIRSF000412">
    <property type="entry name" value="SHMT"/>
    <property type="match status" value="1"/>
</dbReference>
<dbReference type="SUPFAM" id="SSF53383">
    <property type="entry name" value="PLP-dependent transferases"/>
    <property type="match status" value="1"/>
</dbReference>
<dbReference type="PROSITE" id="PS00096">
    <property type="entry name" value="SHMT"/>
    <property type="match status" value="1"/>
</dbReference>
<keyword id="KW-0028">Amino-acid biosynthesis</keyword>
<keyword id="KW-0963">Cytoplasm</keyword>
<keyword id="KW-0554">One-carbon metabolism</keyword>
<keyword id="KW-0663">Pyridoxal phosphate</keyword>
<keyword id="KW-1185">Reference proteome</keyword>
<keyword id="KW-0808">Transferase</keyword>
<protein>
    <recommendedName>
        <fullName evidence="1">Serine hydroxymethyltransferase</fullName>
        <shortName evidence="1">SHMT</shortName>
        <shortName evidence="1">Serine methylase</shortName>
        <ecNumber evidence="1">2.1.2.1</ecNumber>
    </recommendedName>
</protein>